<proteinExistence type="inferred from homology"/>
<reference key="1">
    <citation type="journal article" date="2008" name="Genomics">
        <title>Characterization of ST-4821 complex, a unique Neisseria meningitidis clone.</title>
        <authorList>
            <person name="Peng J."/>
            <person name="Yang L."/>
            <person name="Yang F."/>
            <person name="Yang J."/>
            <person name="Yan Y."/>
            <person name="Nie H."/>
            <person name="Zhang X."/>
            <person name="Xiong Z."/>
            <person name="Jiang Y."/>
            <person name="Cheng F."/>
            <person name="Xu X."/>
            <person name="Chen S."/>
            <person name="Sun L."/>
            <person name="Li W."/>
            <person name="Shen Y."/>
            <person name="Shao Z."/>
            <person name="Liang X."/>
            <person name="Xu J."/>
            <person name="Jin Q."/>
        </authorList>
    </citation>
    <scope>NUCLEOTIDE SEQUENCE [LARGE SCALE GENOMIC DNA]</scope>
    <source>
        <strain>053442</strain>
    </source>
</reference>
<name>GPDA_NEIM0</name>
<accession>A9M084</accession>
<protein>
    <recommendedName>
        <fullName evidence="1">Glycerol-3-phosphate dehydrogenase [NAD(P)+]</fullName>
        <ecNumber evidence="1">1.1.1.94</ecNumber>
    </recommendedName>
    <alternativeName>
        <fullName evidence="1">NAD(P)(+)-dependent glycerol-3-phosphate dehydrogenase</fullName>
    </alternativeName>
    <alternativeName>
        <fullName evidence="1">NAD(P)H-dependent dihydroxyacetone-phosphate reductase</fullName>
    </alternativeName>
</protein>
<gene>
    <name evidence="1" type="primary">gpsA</name>
    <name type="ordered locus">NMCC_0126</name>
</gene>
<organism>
    <name type="scientific">Neisseria meningitidis serogroup C (strain 053442)</name>
    <dbReference type="NCBI Taxonomy" id="374833"/>
    <lineage>
        <taxon>Bacteria</taxon>
        <taxon>Pseudomonadati</taxon>
        <taxon>Pseudomonadota</taxon>
        <taxon>Betaproteobacteria</taxon>
        <taxon>Neisseriales</taxon>
        <taxon>Neisseriaceae</taxon>
        <taxon>Neisseria</taxon>
    </lineage>
</organism>
<dbReference type="EC" id="1.1.1.94" evidence="1"/>
<dbReference type="EMBL" id="CP000381">
    <property type="protein sequence ID" value="ABX72345.1"/>
    <property type="molecule type" value="Genomic_DNA"/>
</dbReference>
<dbReference type="RefSeq" id="WP_002215013.1">
    <property type="nucleotide sequence ID" value="NC_010120.1"/>
</dbReference>
<dbReference type="SMR" id="A9M084"/>
<dbReference type="KEGG" id="nmn:NMCC_0126"/>
<dbReference type="HOGENOM" id="CLU_033449_0_2_4"/>
<dbReference type="UniPathway" id="UPA00940"/>
<dbReference type="Proteomes" id="UP000001177">
    <property type="component" value="Chromosome"/>
</dbReference>
<dbReference type="GO" id="GO:0005829">
    <property type="term" value="C:cytosol"/>
    <property type="evidence" value="ECO:0007669"/>
    <property type="project" value="TreeGrafter"/>
</dbReference>
<dbReference type="GO" id="GO:0047952">
    <property type="term" value="F:glycerol-3-phosphate dehydrogenase [NAD(P)+] activity"/>
    <property type="evidence" value="ECO:0007669"/>
    <property type="project" value="UniProtKB-UniRule"/>
</dbReference>
<dbReference type="GO" id="GO:0051287">
    <property type="term" value="F:NAD binding"/>
    <property type="evidence" value="ECO:0007669"/>
    <property type="project" value="InterPro"/>
</dbReference>
<dbReference type="GO" id="GO:0005975">
    <property type="term" value="P:carbohydrate metabolic process"/>
    <property type="evidence" value="ECO:0007669"/>
    <property type="project" value="InterPro"/>
</dbReference>
<dbReference type="GO" id="GO:0046167">
    <property type="term" value="P:glycerol-3-phosphate biosynthetic process"/>
    <property type="evidence" value="ECO:0007669"/>
    <property type="project" value="UniProtKB-UniRule"/>
</dbReference>
<dbReference type="GO" id="GO:0046168">
    <property type="term" value="P:glycerol-3-phosphate catabolic process"/>
    <property type="evidence" value="ECO:0007669"/>
    <property type="project" value="InterPro"/>
</dbReference>
<dbReference type="GO" id="GO:0006650">
    <property type="term" value="P:glycerophospholipid metabolic process"/>
    <property type="evidence" value="ECO:0007669"/>
    <property type="project" value="UniProtKB-UniRule"/>
</dbReference>
<dbReference type="GO" id="GO:0008654">
    <property type="term" value="P:phospholipid biosynthetic process"/>
    <property type="evidence" value="ECO:0007669"/>
    <property type="project" value="UniProtKB-KW"/>
</dbReference>
<dbReference type="FunFam" id="1.10.1040.10:FF:000001">
    <property type="entry name" value="Glycerol-3-phosphate dehydrogenase [NAD(P)+]"/>
    <property type="match status" value="1"/>
</dbReference>
<dbReference type="FunFam" id="3.40.50.720:FF:000019">
    <property type="entry name" value="Glycerol-3-phosphate dehydrogenase [NAD(P)+]"/>
    <property type="match status" value="1"/>
</dbReference>
<dbReference type="Gene3D" id="1.10.1040.10">
    <property type="entry name" value="N-(1-d-carboxylethyl)-l-norvaline Dehydrogenase, domain 2"/>
    <property type="match status" value="1"/>
</dbReference>
<dbReference type="Gene3D" id="3.40.50.720">
    <property type="entry name" value="NAD(P)-binding Rossmann-like Domain"/>
    <property type="match status" value="1"/>
</dbReference>
<dbReference type="HAMAP" id="MF_00394">
    <property type="entry name" value="NAD_Glyc3P_dehydrog"/>
    <property type="match status" value="1"/>
</dbReference>
<dbReference type="InterPro" id="IPR008927">
    <property type="entry name" value="6-PGluconate_DH-like_C_sf"/>
</dbReference>
<dbReference type="InterPro" id="IPR013328">
    <property type="entry name" value="6PGD_dom2"/>
</dbReference>
<dbReference type="InterPro" id="IPR006168">
    <property type="entry name" value="G3P_DH_NAD-dep"/>
</dbReference>
<dbReference type="InterPro" id="IPR006109">
    <property type="entry name" value="G3P_DH_NAD-dep_C"/>
</dbReference>
<dbReference type="InterPro" id="IPR011128">
    <property type="entry name" value="G3P_DH_NAD-dep_N"/>
</dbReference>
<dbReference type="InterPro" id="IPR036291">
    <property type="entry name" value="NAD(P)-bd_dom_sf"/>
</dbReference>
<dbReference type="NCBIfam" id="NF000940">
    <property type="entry name" value="PRK00094.1-2"/>
    <property type="match status" value="1"/>
</dbReference>
<dbReference type="NCBIfam" id="NF000942">
    <property type="entry name" value="PRK00094.1-4"/>
    <property type="match status" value="1"/>
</dbReference>
<dbReference type="PANTHER" id="PTHR11728">
    <property type="entry name" value="GLYCEROL-3-PHOSPHATE DEHYDROGENASE"/>
    <property type="match status" value="1"/>
</dbReference>
<dbReference type="PANTHER" id="PTHR11728:SF1">
    <property type="entry name" value="GLYCEROL-3-PHOSPHATE DEHYDROGENASE [NAD(+)] 2, CHLOROPLASTIC"/>
    <property type="match status" value="1"/>
</dbReference>
<dbReference type="Pfam" id="PF07479">
    <property type="entry name" value="NAD_Gly3P_dh_C"/>
    <property type="match status" value="1"/>
</dbReference>
<dbReference type="Pfam" id="PF01210">
    <property type="entry name" value="NAD_Gly3P_dh_N"/>
    <property type="match status" value="1"/>
</dbReference>
<dbReference type="PIRSF" id="PIRSF000114">
    <property type="entry name" value="Glycerol-3-P_dh"/>
    <property type="match status" value="1"/>
</dbReference>
<dbReference type="PRINTS" id="PR00077">
    <property type="entry name" value="GPDHDRGNASE"/>
</dbReference>
<dbReference type="SUPFAM" id="SSF48179">
    <property type="entry name" value="6-phosphogluconate dehydrogenase C-terminal domain-like"/>
    <property type="match status" value="1"/>
</dbReference>
<dbReference type="SUPFAM" id="SSF51735">
    <property type="entry name" value="NAD(P)-binding Rossmann-fold domains"/>
    <property type="match status" value="1"/>
</dbReference>
<dbReference type="PROSITE" id="PS00957">
    <property type="entry name" value="NAD_G3PDH"/>
    <property type="match status" value="1"/>
</dbReference>
<comment type="function">
    <text evidence="1">Catalyzes the reduction of the glycolytic intermediate dihydroxyacetone phosphate (DHAP) to sn-glycerol 3-phosphate (G3P), the key precursor for phospholipid synthesis.</text>
</comment>
<comment type="catalytic activity">
    <reaction evidence="1">
        <text>sn-glycerol 3-phosphate + NAD(+) = dihydroxyacetone phosphate + NADH + H(+)</text>
        <dbReference type="Rhea" id="RHEA:11092"/>
        <dbReference type="ChEBI" id="CHEBI:15378"/>
        <dbReference type="ChEBI" id="CHEBI:57540"/>
        <dbReference type="ChEBI" id="CHEBI:57597"/>
        <dbReference type="ChEBI" id="CHEBI:57642"/>
        <dbReference type="ChEBI" id="CHEBI:57945"/>
        <dbReference type="EC" id="1.1.1.94"/>
    </reaction>
    <physiologicalReaction direction="right-to-left" evidence="1">
        <dbReference type="Rhea" id="RHEA:11094"/>
    </physiologicalReaction>
</comment>
<comment type="catalytic activity">
    <reaction evidence="1">
        <text>sn-glycerol 3-phosphate + NADP(+) = dihydroxyacetone phosphate + NADPH + H(+)</text>
        <dbReference type="Rhea" id="RHEA:11096"/>
        <dbReference type="ChEBI" id="CHEBI:15378"/>
        <dbReference type="ChEBI" id="CHEBI:57597"/>
        <dbReference type="ChEBI" id="CHEBI:57642"/>
        <dbReference type="ChEBI" id="CHEBI:57783"/>
        <dbReference type="ChEBI" id="CHEBI:58349"/>
        <dbReference type="EC" id="1.1.1.94"/>
    </reaction>
    <physiologicalReaction direction="right-to-left" evidence="1">
        <dbReference type="Rhea" id="RHEA:11098"/>
    </physiologicalReaction>
</comment>
<comment type="pathway">
    <text evidence="1">Membrane lipid metabolism; glycerophospholipid metabolism.</text>
</comment>
<comment type="subcellular location">
    <subcellularLocation>
        <location evidence="1">Cytoplasm</location>
    </subcellularLocation>
</comment>
<comment type="similarity">
    <text evidence="1">Belongs to the NAD-dependent glycerol-3-phosphate dehydrogenase family.</text>
</comment>
<feature type="chain" id="PRO_1000080309" description="Glycerol-3-phosphate dehydrogenase [NAD(P)+]">
    <location>
        <begin position="1"/>
        <end position="329"/>
    </location>
</feature>
<feature type="active site" description="Proton acceptor" evidence="1">
    <location>
        <position position="189"/>
    </location>
</feature>
<feature type="binding site" evidence="1">
    <location>
        <position position="10"/>
    </location>
    <ligand>
        <name>NADPH</name>
        <dbReference type="ChEBI" id="CHEBI:57783"/>
    </ligand>
</feature>
<feature type="binding site" evidence="1">
    <location>
        <position position="11"/>
    </location>
    <ligand>
        <name>NADPH</name>
        <dbReference type="ChEBI" id="CHEBI:57783"/>
    </ligand>
</feature>
<feature type="binding site" evidence="1">
    <location>
        <position position="31"/>
    </location>
    <ligand>
        <name>NADPH</name>
        <dbReference type="ChEBI" id="CHEBI:57783"/>
    </ligand>
</feature>
<feature type="binding site" evidence="1">
    <location>
        <position position="105"/>
    </location>
    <ligand>
        <name>NADPH</name>
        <dbReference type="ChEBI" id="CHEBI:57783"/>
    </ligand>
</feature>
<feature type="binding site" evidence="1">
    <location>
        <position position="105"/>
    </location>
    <ligand>
        <name>sn-glycerol 3-phosphate</name>
        <dbReference type="ChEBI" id="CHEBI:57597"/>
    </ligand>
</feature>
<feature type="binding site" evidence="1">
    <location>
        <position position="134"/>
    </location>
    <ligand>
        <name>sn-glycerol 3-phosphate</name>
        <dbReference type="ChEBI" id="CHEBI:57597"/>
    </ligand>
</feature>
<feature type="binding site" evidence="1">
    <location>
        <position position="136"/>
    </location>
    <ligand>
        <name>sn-glycerol 3-phosphate</name>
        <dbReference type="ChEBI" id="CHEBI:57597"/>
    </ligand>
</feature>
<feature type="binding site" evidence="1">
    <location>
        <position position="138"/>
    </location>
    <ligand>
        <name>NADPH</name>
        <dbReference type="ChEBI" id="CHEBI:57783"/>
    </ligand>
</feature>
<feature type="binding site" evidence="1">
    <location>
        <position position="189"/>
    </location>
    <ligand>
        <name>sn-glycerol 3-phosphate</name>
        <dbReference type="ChEBI" id="CHEBI:57597"/>
    </ligand>
</feature>
<feature type="binding site" evidence="1">
    <location>
        <position position="242"/>
    </location>
    <ligand>
        <name>sn-glycerol 3-phosphate</name>
        <dbReference type="ChEBI" id="CHEBI:57597"/>
    </ligand>
</feature>
<feature type="binding site" evidence="1">
    <location>
        <position position="252"/>
    </location>
    <ligand>
        <name>sn-glycerol 3-phosphate</name>
        <dbReference type="ChEBI" id="CHEBI:57597"/>
    </ligand>
</feature>
<feature type="binding site" evidence="1">
    <location>
        <position position="253"/>
    </location>
    <ligand>
        <name>NADPH</name>
        <dbReference type="ChEBI" id="CHEBI:57783"/>
    </ligand>
</feature>
<feature type="binding site" evidence="1">
    <location>
        <position position="253"/>
    </location>
    <ligand>
        <name>sn-glycerol 3-phosphate</name>
        <dbReference type="ChEBI" id="CHEBI:57597"/>
    </ligand>
</feature>
<feature type="binding site" evidence="1">
    <location>
        <position position="254"/>
    </location>
    <ligand>
        <name>sn-glycerol 3-phosphate</name>
        <dbReference type="ChEBI" id="CHEBI:57597"/>
    </ligand>
</feature>
<feature type="binding site" evidence="1">
    <location>
        <position position="277"/>
    </location>
    <ligand>
        <name>NADPH</name>
        <dbReference type="ChEBI" id="CHEBI:57783"/>
    </ligand>
</feature>
<feature type="binding site" evidence="1">
    <location>
        <position position="279"/>
    </location>
    <ligand>
        <name>NADPH</name>
        <dbReference type="ChEBI" id="CHEBI:57783"/>
    </ligand>
</feature>
<keyword id="KW-0963">Cytoplasm</keyword>
<keyword id="KW-0444">Lipid biosynthesis</keyword>
<keyword id="KW-0443">Lipid metabolism</keyword>
<keyword id="KW-0520">NAD</keyword>
<keyword id="KW-0521">NADP</keyword>
<keyword id="KW-0547">Nucleotide-binding</keyword>
<keyword id="KW-0560">Oxidoreductase</keyword>
<keyword id="KW-0594">Phospholipid biosynthesis</keyword>
<keyword id="KW-1208">Phospholipid metabolism</keyword>
<evidence type="ECO:0000255" key="1">
    <source>
        <dbReference type="HAMAP-Rule" id="MF_00394"/>
    </source>
</evidence>
<sequence>MKITVIGAGSWGTALALHFSQHGNRVSLWTRNADQVRQMQEARENKRGLPGFSFPETLEVCADLADALKDSGLVLIVTSVAGLRSSAELLKQYGAGHLPVLAACKGFEQDTGLLTFQVLKEVLPDNKKIGVLSGPSFAQELAKQLPCAVVLASENQEWIEELVPQLNTTVMRLYGSTDVIGVAVGGAVKNVMAIATGLSDGLEYGLNARAALVTRGLAEITRLASAMGAQPKTMMGLAGIGDLILTCTGALSRNRRVGLGLAEGKELHQVLVEIGHVSEGVSTIEEVFNTACKYQIDMPITQTLLQLIRKEMTPQQVVERLMERSARFE</sequence>